<keyword id="KW-0150">Chloroplast</keyword>
<keyword id="KW-0186">Copper</keyword>
<keyword id="KW-1015">Disulfide bond</keyword>
<keyword id="KW-0479">Metal-binding</keyword>
<keyword id="KW-0560">Oxidoreductase</keyword>
<keyword id="KW-0934">Plastid</keyword>
<keyword id="KW-1185">Reference proteome</keyword>
<keyword id="KW-0883">Thioether bond</keyword>
<keyword id="KW-0793">Thylakoid</keyword>
<keyword id="KW-0809">Transit peptide</keyword>
<organism>
    <name type="scientific">Solanum tuberosum</name>
    <name type="common">Potato</name>
    <dbReference type="NCBI Taxonomy" id="4113"/>
    <lineage>
        <taxon>Eukaryota</taxon>
        <taxon>Viridiplantae</taxon>
        <taxon>Streptophyta</taxon>
        <taxon>Embryophyta</taxon>
        <taxon>Tracheophyta</taxon>
        <taxon>Spermatophyta</taxon>
        <taxon>Magnoliopsida</taxon>
        <taxon>eudicotyledons</taxon>
        <taxon>Gunneridae</taxon>
        <taxon>Pentapetalae</taxon>
        <taxon>asterids</taxon>
        <taxon>lamiids</taxon>
        <taxon>Solanales</taxon>
        <taxon>Solanaceae</taxon>
        <taxon>Solanoideae</taxon>
        <taxon>Solaneae</taxon>
        <taxon>Solanum</taxon>
    </lineage>
</organism>
<accession>Q06355</accession>
<reference key="1">
    <citation type="journal article" date="1993" name="Plant Mol. Biol.">
        <title>cDNA cloning and expression of potato polyphenol oxidase.</title>
        <authorList>
            <person name="Hunt M.D."/>
            <person name="Eannetta N.T."/>
            <person name="Yu H."/>
            <person name="Newman S.M."/>
            <person name="Steffens J.C."/>
        </authorList>
    </citation>
    <scope>NUCLEOTIDE SEQUENCE [MRNA]</scope>
    <source>
        <strain>cv. Katahdin</strain>
        <tissue>Leaf</tissue>
    </source>
</reference>
<evidence type="ECO:0000250" key="1">
    <source>
        <dbReference type="UniProtKB" id="Q9ZP19"/>
    </source>
</evidence>
<evidence type="ECO:0000255" key="2"/>
<evidence type="ECO:0000305" key="3"/>
<dbReference type="EC" id="1.10.3.1"/>
<dbReference type="EMBL" id="M95197">
    <property type="protein sequence ID" value="AAA02879.1"/>
    <property type="molecule type" value="mRNA"/>
</dbReference>
<dbReference type="PIR" id="S30929">
    <property type="entry name" value="S30929"/>
</dbReference>
<dbReference type="SMR" id="Q06355"/>
<dbReference type="STRING" id="4113.Q06355"/>
<dbReference type="PaxDb" id="4113-PGSC0003DMT400076054"/>
<dbReference type="eggNOG" id="ENOG502QVBP">
    <property type="taxonomic scope" value="Eukaryota"/>
</dbReference>
<dbReference type="InParanoid" id="Q06355"/>
<dbReference type="Proteomes" id="UP000011115">
    <property type="component" value="Unassembled WGS sequence"/>
</dbReference>
<dbReference type="ExpressionAtlas" id="Q06355">
    <property type="expression patterns" value="baseline"/>
</dbReference>
<dbReference type="GO" id="GO:0009543">
    <property type="term" value="C:chloroplast thylakoid lumen"/>
    <property type="evidence" value="ECO:0007669"/>
    <property type="project" value="UniProtKB-SubCell"/>
</dbReference>
<dbReference type="GO" id="GO:0004097">
    <property type="term" value="F:catechol oxidase activity"/>
    <property type="evidence" value="ECO:0007669"/>
    <property type="project" value="UniProtKB-EC"/>
</dbReference>
<dbReference type="GO" id="GO:0046872">
    <property type="term" value="F:metal ion binding"/>
    <property type="evidence" value="ECO:0007669"/>
    <property type="project" value="UniProtKB-KW"/>
</dbReference>
<dbReference type="GO" id="GO:0046148">
    <property type="term" value="P:pigment biosynthetic process"/>
    <property type="evidence" value="ECO:0007669"/>
    <property type="project" value="InterPro"/>
</dbReference>
<dbReference type="Gene3D" id="1.10.1280.10">
    <property type="entry name" value="Di-copper center containing domain from catechol oxidase"/>
    <property type="match status" value="1"/>
</dbReference>
<dbReference type="InterPro" id="IPR008922">
    <property type="entry name" value="Di-copper_centre_dom_sf"/>
</dbReference>
<dbReference type="InterPro" id="IPR016213">
    <property type="entry name" value="Polyphenol_oxidase"/>
</dbReference>
<dbReference type="InterPro" id="IPR022740">
    <property type="entry name" value="Polyphenol_oxidase_C"/>
</dbReference>
<dbReference type="InterPro" id="IPR022739">
    <property type="entry name" value="Polyphenol_oxidase_cen"/>
</dbReference>
<dbReference type="InterPro" id="IPR050316">
    <property type="entry name" value="Tyrosinase/Hemocyanin"/>
</dbReference>
<dbReference type="InterPro" id="IPR002227">
    <property type="entry name" value="Tyrosinase_Cu-bd"/>
</dbReference>
<dbReference type="PANTHER" id="PTHR11474:SF92">
    <property type="entry name" value="POLYPHENOL OXIDASE F, CHLOROPLASTIC"/>
    <property type="match status" value="1"/>
</dbReference>
<dbReference type="PANTHER" id="PTHR11474">
    <property type="entry name" value="TYROSINASE FAMILY MEMBER"/>
    <property type="match status" value="1"/>
</dbReference>
<dbReference type="Pfam" id="PF12142">
    <property type="entry name" value="PPO1_DWL"/>
    <property type="match status" value="1"/>
</dbReference>
<dbReference type="Pfam" id="PF12143">
    <property type="entry name" value="PPO1_KFDV"/>
    <property type="match status" value="1"/>
</dbReference>
<dbReference type="Pfam" id="PF00264">
    <property type="entry name" value="Tyrosinase"/>
    <property type="match status" value="1"/>
</dbReference>
<dbReference type="PIRSF" id="PIRSF000290">
    <property type="entry name" value="PPO_plant"/>
    <property type="match status" value="1"/>
</dbReference>
<dbReference type="PRINTS" id="PR00092">
    <property type="entry name" value="TYROSINASE"/>
</dbReference>
<dbReference type="SUPFAM" id="SSF48056">
    <property type="entry name" value="Di-copper centre-containing domain"/>
    <property type="match status" value="1"/>
</dbReference>
<dbReference type="PROSITE" id="PS00497">
    <property type="entry name" value="TYROSINASE_1"/>
    <property type="match status" value="1"/>
</dbReference>
<dbReference type="PROSITE" id="PS00498">
    <property type="entry name" value="TYROSINASE_2"/>
    <property type="match status" value="1"/>
</dbReference>
<name>PPOB_SOLTU</name>
<proteinExistence type="evidence at transcript level"/>
<protein>
    <recommendedName>
        <fullName>Catechol oxidase B, chloroplastic</fullName>
        <ecNumber>1.10.3.1</ecNumber>
    </recommendedName>
    <alternativeName>
        <fullName>Polyphenol oxidase</fullName>
        <shortName>PPO</shortName>
    </alternativeName>
</protein>
<comment type="function">
    <text>Catalyzes the oxidation of mono- and o-diphenols to o-diquinones.</text>
</comment>
<comment type="catalytic activity">
    <reaction>
        <text>2 catechol + O2 = 2 1,2-benzoquinone + 2 H2O</text>
        <dbReference type="Rhea" id="RHEA:21632"/>
        <dbReference type="ChEBI" id="CHEBI:15377"/>
        <dbReference type="ChEBI" id="CHEBI:15379"/>
        <dbReference type="ChEBI" id="CHEBI:17253"/>
        <dbReference type="ChEBI" id="CHEBI:18135"/>
        <dbReference type="EC" id="1.10.3.1"/>
    </reaction>
</comment>
<comment type="cofactor">
    <cofactor evidence="1">
        <name>Cu(2+)</name>
        <dbReference type="ChEBI" id="CHEBI:29036"/>
    </cofactor>
    <text evidence="1">Binds 2 copper ions per subunit.</text>
</comment>
<comment type="subcellular location">
    <subcellularLocation>
        <location>Plastid</location>
        <location>Chloroplast thylakoid lumen</location>
    </subcellularLocation>
</comment>
<comment type="similarity">
    <text evidence="3">Belongs to the tyrosinase family.</text>
</comment>
<sequence length="588" mass="66241">SSSSTTTIPLCTNKSLSSSFTTNNSSFLSKPSQLFLHGRRNQSFKVSCNANNNVGEHDKNLDTVDRRNVLLGLGGLYGAANLAPLASASPIPPPDLKSCGVAHVTEGVDVTYSCCPPVPDDIDSVPYYKFPPMTKLRIRPPAHAADEEYVAKYQLATSRMRELDKDSFDPLGFKQQANIHCAYCNGAYKVGGKELQVHFSWLFFPFHRWYLYFYERILGSLINDPTFALPYWNWDHPKGMRIPPMFDREGSSLYDDKRNQNHRNGTIIDLGHFGQEVDTPQLQIMTNNLTLMYRQMVTNAPCPSQFFGAAYPLGTEPSPGMGTIENIPHTPVHIWTGDSPRQKNGENMGNFYSAGLDPIFYCHHANVDRMWDEWKLIGGKRRDLSNKDWLNSEFFFYDENRNPYRVKVRDCLDSKKMGFSYAPMPTPWRNFKPIRKTTAGKVNTASIAPVTKVFPLAKLDRAISFSITRPASSRTTQEKNEQEEILTFNKVAYDDTKYVRFDVFLNVDKTVNADELDKAEFAGSYTSLPHVHGNNTNHVTSVTFKLAITELLEDNGLEDEDTIAVTLVPKVGGEGVSIESVEIKLEDC</sequence>
<feature type="transit peptide" description="Chloroplast" evidence="2">
    <location>
        <begin position="1" status="less than"/>
        <end position="88"/>
    </location>
</feature>
<feature type="chain" id="PRO_0000035917" description="Catechol oxidase B, chloroplastic">
    <location>
        <begin position="89"/>
        <end position="588"/>
    </location>
</feature>
<feature type="binding site" evidence="1">
    <location>
        <position position="180"/>
    </location>
    <ligand>
        <name>Cu cation</name>
        <dbReference type="ChEBI" id="CHEBI:23378"/>
        <label>A</label>
    </ligand>
</feature>
<feature type="binding site" evidence="1">
    <location>
        <position position="198"/>
    </location>
    <ligand>
        <name>Cu cation</name>
        <dbReference type="ChEBI" id="CHEBI:23378"/>
        <label>A</label>
    </ligand>
</feature>
<feature type="binding site" evidence="1">
    <location>
        <position position="207"/>
    </location>
    <ligand>
        <name>Cu cation</name>
        <dbReference type="ChEBI" id="CHEBI:23378"/>
        <label>A</label>
    </ligand>
</feature>
<feature type="binding site" evidence="1">
    <location>
        <position position="329"/>
    </location>
    <ligand>
        <name>Cu cation</name>
        <dbReference type="ChEBI" id="CHEBI:23378"/>
        <label>B</label>
    </ligand>
</feature>
<feature type="binding site" evidence="1">
    <location>
        <position position="333"/>
    </location>
    <ligand>
        <name>Cu cation</name>
        <dbReference type="ChEBI" id="CHEBI:23378"/>
        <label>B</label>
    </ligand>
</feature>
<feature type="binding site" evidence="1">
    <location>
        <position position="364"/>
    </location>
    <ligand>
        <name>Cu cation</name>
        <dbReference type="ChEBI" id="CHEBI:23378"/>
        <label>B</label>
    </ligand>
</feature>
<feature type="disulfide bond" evidence="1">
    <location>
        <begin position="99"/>
        <end position="115"/>
    </location>
</feature>
<feature type="disulfide bond" evidence="1">
    <location>
        <begin position="114"/>
        <end position="181"/>
    </location>
</feature>
<feature type="cross-link" description="2'-(S-cysteinyl)-histidine (Cys-His)" evidence="1">
    <location>
        <begin position="184"/>
        <end position="198"/>
    </location>
</feature>
<feature type="non-terminal residue">
    <location>
        <position position="1"/>
    </location>
</feature>